<protein>
    <recommendedName>
        <fullName evidence="1">Vitamin B12 import system permease protein BtuC</fullName>
    </recommendedName>
</protein>
<dbReference type="EMBL" id="AP009240">
    <property type="protein sequence ID" value="BAG77360.1"/>
    <property type="molecule type" value="Genomic_DNA"/>
</dbReference>
<dbReference type="RefSeq" id="WP_000956530.1">
    <property type="nucleotide sequence ID" value="NC_011415.1"/>
</dbReference>
<dbReference type="SMR" id="B6I8R6"/>
<dbReference type="KEGG" id="ecy:ECSE_1836"/>
<dbReference type="HOGENOM" id="CLU_013016_0_3_6"/>
<dbReference type="Proteomes" id="UP000008199">
    <property type="component" value="Chromosome"/>
</dbReference>
<dbReference type="GO" id="GO:0005886">
    <property type="term" value="C:plasma membrane"/>
    <property type="evidence" value="ECO:0007669"/>
    <property type="project" value="UniProtKB-SubCell"/>
</dbReference>
<dbReference type="GO" id="GO:0090482">
    <property type="term" value="F:vitamin transmembrane transporter activity"/>
    <property type="evidence" value="ECO:0007669"/>
    <property type="project" value="UniProtKB-UniRule"/>
</dbReference>
<dbReference type="GO" id="GO:0015889">
    <property type="term" value="P:cobalamin transport"/>
    <property type="evidence" value="ECO:0007669"/>
    <property type="project" value="UniProtKB-UniRule"/>
</dbReference>
<dbReference type="CDD" id="cd06550">
    <property type="entry name" value="TM_ABC_iron-siderophores_like"/>
    <property type="match status" value="1"/>
</dbReference>
<dbReference type="FunFam" id="1.10.3470.10:FF:000001">
    <property type="entry name" value="Vitamin B12 ABC transporter permease BtuC"/>
    <property type="match status" value="1"/>
</dbReference>
<dbReference type="Gene3D" id="1.10.3470.10">
    <property type="entry name" value="ABC transporter involved in vitamin B12 uptake, BtuC"/>
    <property type="match status" value="1"/>
</dbReference>
<dbReference type="HAMAP" id="MF_01004">
    <property type="entry name" value="BtuC"/>
    <property type="match status" value="1"/>
</dbReference>
<dbReference type="InterPro" id="IPR037294">
    <property type="entry name" value="ABC_BtuC-like"/>
</dbReference>
<dbReference type="InterPro" id="IPR023691">
    <property type="entry name" value="ABC_transptr_BtuC"/>
</dbReference>
<dbReference type="InterPro" id="IPR000522">
    <property type="entry name" value="ABC_transptr_permease_BtuC"/>
</dbReference>
<dbReference type="NCBIfam" id="NF003001">
    <property type="entry name" value="PRK03784.1"/>
    <property type="match status" value="1"/>
</dbReference>
<dbReference type="PANTHER" id="PTHR30472">
    <property type="entry name" value="FERRIC ENTEROBACTIN TRANSPORT SYSTEM PERMEASE PROTEIN"/>
    <property type="match status" value="1"/>
</dbReference>
<dbReference type="PANTHER" id="PTHR30472:SF29">
    <property type="entry name" value="VITAMIN B12 IMPORT SYSTEM PERMEASE PROTEIN BTUC"/>
    <property type="match status" value="1"/>
</dbReference>
<dbReference type="Pfam" id="PF01032">
    <property type="entry name" value="FecCD"/>
    <property type="match status" value="1"/>
</dbReference>
<dbReference type="SUPFAM" id="SSF81345">
    <property type="entry name" value="ABC transporter involved in vitamin B12 uptake, BtuC"/>
    <property type="match status" value="1"/>
</dbReference>
<comment type="function">
    <text evidence="1">Part of the ABC transporter complex BtuCDF involved in vitamin B12 import. Involved in the translocation of the substrate across the membrane.</text>
</comment>
<comment type="subunit">
    <text evidence="1">The complex is composed of two ATP-binding proteins (BtuD), two transmembrane proteins (BtuC) and a solute-binding protein (BtuF).</text>
</comment>
<comment type="subcellular location">
    <subcellularLocation>
        <location evidence="1">Cell inner membrane</location>
        <topology evidence="1">Multi-pass membrane protein</topology>
    </subcellularLocation>
</comment>
<comment type="similarity">
    <text evidence="1">Belongs to the binding-protein-dependent transport system permease family. FecCD subfamily.</text>
</comment>
<accession>B6I8R6</accession>
<proteinExistence type="inferred from homology"/>
<gene>
    <name evidence="1" type="primary">btuC</name>
    <name type="ordered locus">ECSE_1836</name>
</gene>
<name>BTUC_ECOSE</name>
<evidence type="ECO:0000255" key="1">
    <source>
        <dbReference type="HAMAP-Rule" id="MF_01004"/>
    </source>
</evidence>
<reference key="1">
    <citation type="journal article" date="2008" name="DNA Res.">
        <title>Complete genome sequence and comparative analysis of the wild-type commensal Escherichia coli strain SE11 isolated from a healthy adult.</title>
        <authorList>
            <person name="Oshima K."/>
            <person name="Toh H."/>
            <person name="Ogura Y."/>
            <person name="Sasamoto H."/>
            <person name="Morita H."/>
            <person name="Park S.-H."/>
            <person name="Ooka T."/>
            <person name="Iyoda S."/>
            <person name="Taylor T.D."/>
            <person name="Hayashi T."/>
            <person name="Itoh K."/>
            <person name="Hattori M."/>
        </authorList>
    </citation>
    <scope>NUCLEOTIDE SEQUENCE [LARGE SCALE GENOMIC DNA]</scope>
    <source>
        <strain>SE11</strain>
    </source>
</reference>
<organism>
    <name type="scientific">Escherichia coli (strain SE11)</name>
    <dbReference type="NCBI Taxonomy" id="409438"/>
    <lineage>
        <taxon>Bacteria</taxon>
        <taxon>Pseudomonadati</taxon>
        <taxon>Pseudomonadota</taxon>
        <taxon>Gammaproteobacteria</taxon>
        <taxon>Enterobacterales</taxon>
        <taxon>Enterobacteriaceae</taxon>
        <taxon>Escherichia</taxon>
    </lineage>
</organism>
<keyword id="KW-0997">Cell inner membrane</keyword>
<keyword id="KW-1003">Cell membrane</keyword>
<keyword id="KW-0472">Membrane</keyword>
<keyword id="KW-0812">Transmembrane</keyword>
<keyword id="KW-1133">Transmembrane helix</keyword>
<keyword id="KW-0813">Transport</keyword>
<feature type="chain" id="PRO_1000201543" description="Vitamin B12 import system permease protein BtuC">
    <location>
        <begin position="1"/>
        <end position="326"/>
    </location>
</feature>
<feature type="transmembrane region" description="Helical" evidence="1">
    <location>
        <begin position="15"/>
        <end position="35"/>
    </location>
</feature>
<feature type="transmembrane region" description="Helical" evidence="1">
    <location>
        <begin position="61"/>
        <end position="81"/>
    </location>
</feature>
<feature type="transmembrane region" description="Helical" evidence="1">
    <location>
        <begin position="88"/>
        <end position="108"/>
    </location>
</feature>
<feature type="transmembrane region" description="Helical" evidence="1">
    <location>
        <begin position="112"/>
        <end position="132"/>
    </location>
</feature>
<feature type="transmembrane region" description="Helical" evidence="1">
    <location>
        <begin position="146"/>
        <end position="166"/>
    </location>
</feature>
<feature type="transmembrane region" description="Helical" evidence="1">
    <location>
        <begin position="184"/>
        <end position="204"/>
    </location>
</feature>
<feature type="transmembrane region" description="Helical" evidence="1">
    <location>
        <begin position="240"/>
        <end position="260"/>
    </location>
</feature>
<feature type="transmembrane region" description="Helical" evidence="1">
    <location>
        <begin position="274"/>
        <end position="294"/>
    </location>
</feature>
<feature type="transmembrane region" description="Helical" evidence="1">
    <location>
        <begin position="302"/>
        <end position="322"/>
    </location>
</feature>
<sequence>MLTLARQQQRQNIRWLLCLSVLMLLALLLSLCAGEQWISPGDWFTPRGELFVWQIRLPRTLAVLLVGAALAISGAVMQALFENPLAEPGLLGVSNGAGVGLIAAVLLGQGQLPNWALGLCAIAGALIITLILLRFARRHLSTSRLLLAGVALGIICSALMTWAIYFSTSVDLRQLMYWMMGGFGGVDWRQSWLMLALIPVLLWICCQSRPMNMLALGEISARQLGLPLWFWRNVLVAATGWMVGVSVALAGAIGFIGLVIPHILRLCGLTDHRVLLPGCALAGASALLLADVVARLALAAAELPIGVVTATLGAPVFIWLLLKAGR</sequence>